<evidence type="ECO:0000250" key="1">
    <source>
        <dbReference type="UniProtKB" id="A8MTA8"/>
    </source>
</evidence>
<evidence type="ECO:0000256" key="2">
    <source>
        <dbReference type="SAM" id="MobiDB-lite"/>
    </source>
</evidence>
<evidence type="ECO:0000305" key="3"/>
<reference key="1">
    <citation type="submission" date="2007-12" db="EMBL/GenBank/DDBJ databases">
        <authorList>
            <consortium name="NIH - Xenopus Gene Collection (XGC) project"/>
        </authorList>
    </citation>
    <scope>NUCLEOTIDE SEQUENCE [LARGE SCALE MRNA]</scope>
    <source>
        <tissue>Embryo</tissue>
    </source>
</reference>
<comment type="function">
    <text evidence="1">Microtubule inner protein (MIP) part of the dynein-decorated doublet microtubules (DMTs) in cilia axoneme, which is required for motile cilia beating.</text>
</comment>
<comment type="subcellular location">
    <subcellularLocation>
        <location evidence="1">Cytoplasm</location>
        <location evidence="1">Cytoskeleton</location>
        <location evidence="1">Cilium axoneme</location>
    </subcellularLocation>
</comment>
<comment type="tissue specificity">
    <text evidence="1">Expressed in airway epithelial cells.</text>
</comment>
<comment type="similarity">
    <text evidence="3">Belongs to the CIMIP2 family.</text>
</comment>
<feature type="chain" id="PRO_0000342386" description="Ciliary microtubule inner protein 2B">
    <location>
        <begin position="1"/>
        <end position="311"/>
    </location>
</feature>
<feature type="region of interest" description="Disordered" evidence="2">
    <location>
        <begin position="64"/>
        <end position="93"/>
    </location>
</feature>
<feature type="region of interest" description="Disordered" evidence="2">
    <location>
        <begin position="150"/>
        <end position="183"/>
    </location>
</feature>
<sequence>MAVTFPPKISPTLMTPDPHFIPGYSGFCPQYRYSLGKTYGQLTSHLLTNPDIRRSGHLVLQSNPFPPAPRGHSYNEASQELGGRRRRQRLGDPKLTISMIPGYTGFIPRSQKFFAKTYAETSWDALSDFHNEQQMQESQRQEMLLTSKLQEGRQPQTEHEKQLLTARHRTPLPALSKEPAPFMSLRGFQPQGSPYYMEEENPNKYFISGYTGYVPRSRFLIGNGYPITTNRAMVEFAHMNQKKGVRFSDQQGHNEGDNLHTEQGQIYLEELGLLPRYTGYVPGYKFQFGNTFGRLTQNALGQSTLQKQTVN</sequence>
<gene>
    <name type="primary">cimip2b</name>
    <name type="synonym">fam166b</name>
</gene>
<keyword id="KW-0966">Cell projection</keyword>
<keyword id="KW-0963">Cytoplasm</keyword>
<keyword id="KW-0206">Cytoskeleton</keyword>
<keyword id="KW-1185">Reference proteome</keyword>
<name>CMI2B_XENLA</name>
<dbReference type="EMBL" id="BC155919">
    <property type="protein sequence ID" value="AAI55920.1"/>
    <property type="molecule type" value="mRNA"/>
</dbReference>
<dbReference type="RefSeq" id="NP_001106345.1">
    <property type="nucleotide sequence ID" value="NM_001112874.1"/>
</dbReference>
<dbReference type="GeneID" id="100127307"/>
<dbReference type="KEGG" id="xla:100127307"/>
<dbReference type="AGR" id="Xenbase:XB-GENE-6252437"/>
<dbReference type="CTD" id="100127307"/>
<dbReference type="Xenbase" id="XB-GENE-6252437">
    <property type="gene designation" value="cimip2b.S"/>
</dbReference>
<dbReference type="OrthoDB" id="2019884at2759"/>
<dbReference type="Proteomes" id="UP000186698">
    <property type="component" value="Chromosome 1S"/>
</dbReference>
<dbReference type="Bgee" id="100127307">
    <property type="expression patterns" value="Expressed in neurula embryo and 10 other cell types or tissues"/>
</dbReference>
<dbReference type="GO" id="GO:0005879">
    <property type="term" value="C:axonemal microtubule"/>
    <property type="evidence" value="ECO:0000250"/>
    <property type="project" value="UniProtKB"/>
</dbReference>
<dbReference type="InterPro" id="IPR018902">
    <property type="entry name" value="CMI2A-C-like_dom"/>
</dbReference>
<dbReference type="PANTHER" id="PTHR22146">
    <property type="entry name" value="CAT EYE SYNDROME CRITICAL REGION PROTEIN 6"/>
    <property type="match status" value="1"/>
</dbReference>
<dbReference type="PANTHER" id="PTHR22146:SF8">
    <property type="entry name" value="PROTEIN FAM166B"/>
    <property type="match status" value="1"/>
</dbReference>
<dbReference type="Pfam" id="PF10629">
    <property type="entry name" value="CMI2B-like"/>
    <property type="match status" value="3"/>
</dbReference>
<protein>
    <recommendedName>
        <fullName>Ciliary microtubule inner protein 2B</fullName>
    </recommendedName>
</protein>
<organism>
    <name type="scientific">Xenopus laevis</name>
    <name type="common">African clawed frog</name>
    <dbReference type="NCBI Taxonomy" id="8355"/>
    <lineage>
        <taxon>Eukaryota</taxon>
        <taxon>Metazoa</taxon>
        <taxon>Chordata</taxon>
        <taxon>Craniata</taxon>
        <taxon>Vertebrata</taxon>
        <taxon>Euteleostomi</taxon>
        <taxon>Amphibia</taxon>
        <taxon>Batrachia</taxon>
        <taxon>Anura</taxon>
        <taxon>Pipoidea</taxon>
        <taxon>Pipidae</taxon>
        <taxon>Xenopodinae</taxon>
        <taxon>Xenopus</taxon>
        <taxon>Xenopus</taxon>
    </lineage>
</organism>
<proteinExistence type="evidence at transcript level"/>
<accession>A9JS51</accession>